<reference key="1">
    <citation type="journal article" date="2000" name="Nature">
        <title>The genome sequence of the thermoacidophilic scavenger Thermoplasma acidophilum.</title>
        <authorList>
            <person name="Ruepp A."/>
            <person name="Graml W."/>
            <person name="Santos-Martinez M.-L."/>
            <person name="Koretke K.K."/>
            <person name="Volker C."/>
            <person name="Mewes H.-W."/>
            <person name="Frishman D."/>
            <person name="Stocker S."/>
            <person name="Lupas A.N."/>
            <person name="Baumeister W."/>
        </authorList>
    </citation>
    <scope>NUCLEOTIDE SEQUENCE [LARGE SCALE GENOMIC DNA]</scope>
    <source>
        <strain>ATCC 25905 / DSM 1728 / JCM 9062 / NBRC 15155 / AMRC-C165</strain>
    </source>
</reference>
<sequence>MDEEMLIPEEEYQKSGVHIGTQVKSSDMKPYIFKIRNDGLYILDVKKTNSKLIVAGKMLARFEPQDILVVAQRQYAFRPVAKFAEVTGATAITGRFNPGTLTNPSLKFYKEVKVIIVTDPLADVQAMKEAVKIGIPIIALCDANNKTDFVDLIIPTNNKGRRSLAVIYWLLAREILKNRGTITSYDQFKYTIDDFEAQI</sequence>
<evidence type="ECO:0000305" key="1"/>
<name>RS2_THEAC</name>
<gene>
    <name type="primary">rps2</name>
    <name type="ordered locus">Ta1190</name>
</gene>
<protein>
    <recommendedName>
        <fullName evidence="1">Small ribosomal subunit protein uS2</fullName>
    </recommendedName>
    <alternativeName>
        <fullName>30S ribosomal protein S2</fullName>
    </alternativeName>
</protein>
<organism>
    <name type="scientific">Thermoplasma acidophilum (strain ATCC 25905 / DSM 1728 / JCM 9062 / NBRC 15155 / AMRC-C165)</name>
    <dbReference type="NCBI Taxonomy" id="273075"/>
    <lineage>
        <taxon>Archaea</taxon>
        <taxon>Methanobacteriati</taxon>
        <taxon>Thermoplasmatota</taxon>
        <taxon>Thermoplasmata</taxon>
        <taxon>Thermoplasmatales</taxon>
        <taxon>Thermoplasmataceae</taxon>
        <taxon>Thermoplasma</taxon>
    </lineage>
</organism>
<proteinExistence type="inferred from homology"/>
<dbReference type="EMBL" id="AL445066">
    <property type="protein sequence ID" value="CAC12315.1"/>
    <property type="molecule type" value="Genomic_DNA"/>
</dbReference>
<dbReference type="RefSeq" id="WP_010901597.1">
    <property type="nucleotide sequence ID" value="NC_002578.1"/>
</dbReference>
<dbReference type="SMR" id="P57712"/>
<dbReference type="FunCoup" id="P57712">
    <property type="interactions" value="124"/>
</dbReference>
<dbReference type="STRING" id="273075.gene:9572413"/>
<dbReference type="PaxDb" id="273075-Ta1190"/>
<dbReference type="EnsemblBacteria" id="CAC12315">
    <property type="protein sequence ID" value="CAC12315"/>
    <property type="gene ID" value="CAC12315"/>
</dbReference>
<dbReference type="KEGG" id="tac:Ta1190"/>
<dbReference type="eggNOG" id="arCOG04245">
    <property type="taxonomic scope" value="Archaea"/>
</dbReference>
<dbReference type="HOGENOM" id="CLU_058171_3_0_2"/>
<dbReference type="InParanoid" id="P57712"/>
<dbReference type="OrthoDB" id="371797at2157"/>
<dbReference type="Proteomes" id="UP000001024">
    <property type="component" value="Chromosome"/>
</dbReference>
<dbReference type="GO" id="GO:0015935">
    <property type="term" value="C:small ribosomal subunit"/>
    <property type="evidence" value="ECO:0007669"/>
    <property type="project" value="InterPro"/>
</dbReference>
<dbReference type="GO" id="GO:0003735">
    <property type="term" value="F:structural constituent of ribosome"/>
    <property type="evidence" value="ECO:0007669"/>
    <property type="project" value="InterPro"/>
</dbReference>
<dbReference type="GO" id="GO:0006412">
    <property type="term" value="P:translation"/>
    <property type="evidence" value="ECO:0007669"/>
    <property type="project" value="UniProtKB-UniRule"/>
</dbReference>
<dbReference type="CDD" id="cd01425">
    <property type="entry name" value="RPS2"/>
    <property type="match status" value="1"/>
</dbReference>
<dbReference type="FunFam" id="3.40.50.10490:FF:000030">
    <property type="entry name" value="30S ribosomal protein S2"/>
    <property type="match status" value="1"/>
</dbReference>
<dbReference type="Gene3D" id="3.40.50.10490">
    <property type="entry name" value="Glucose-6-phosphate isomerase like protein, domain 1"/>
    <property type="match status" value="1"/>
</dbReference>
<dbReference type="HAMAP" id="MF_00291_A">
    <property type="entry name" value="Ribosomal_uS2_A"/>
    <property type="match status" value="1"/>
</dbReference>
<dbReference type="InterPro" id="IPR001865">
    <property type="entry name" value="Ribosomal_uS2"/>
</dbReference>
<dbReference type="InterPro" id="IPR023454">
    <property type="entry name" value="Ribosomal_uS2_arc"/>
</dbReference>
<dbReference type="InterPro" id="IPR005707">
    <property type="entry name" value="Ribosomal_uS2_euk/arc"/>
</dbReference>
<dbReference type="InterPro" id="IPR023591">
    <property type="entry name" value="Ribosomal_uS2_flav_dom_sf"/>
</dbReference>
<dbReference type="NCBIfam" id="TIGR01012">
    <property type="entry name" value="uS2_euk_arch"/>
    <property type="match status" value="1"/>
</dbReference>
<dbReference type="PANTHER" id="PTHR11489">
    <property type="entry name" value="40S RIBOSOMAL PROTEIN SA"/>
    <property type="match status" value="1"/>
</dbReference>
<dbReference type="Pfam" id="PF00318">
    <property type="entry name" value="Ribosomal_S2"/>
    <property type="match status" value="2"/>
</dbReference>
<dbReference type="PRINTS" id="PR00395">
    <property type="entry name" value="RIBOSOMALS2"/>
</dbReference>
<dbReference type="SUPFAM" id="SSF52313">
    <property type="entry name" value="Ribosomal protein S2"/>
    <property type="match status" value="1"/>
</dbReference>
<feature type="chain" id="PRO_0000134336" description="Small ribosomal subunit protein uS2">
    <location>
        <begin position="1"/>
        <end position="199"/>
    </location>
</feature>
<keyword id="KW-1185">Reference proteome</keyword>
<keyword id="KW-0687">Ribonucleoprotein</keyword>
<keyword id="KW-0689">Ribosomal protein</keyword>
<comment type="similarity">
    <text evidence="1">Belongs to the universal ribosomal protein uS2 family.</text>
</comment>
<accession>P57712</accession>
<accession>Q9HIY6</accession>